<gene>
    <name type="primary">Doc2a</name>
</gene>
<protein>
    <recommendedName>
        <fullName>Double C2-like domain-containing protein alpha</fullName>
        <shortName>Doc2-alpha</shortName>
    </recommendedName>
</protein>
<accession>Q7TNF0</accession>
<organism>
    <name type="scientific">Mus musculus</name>
    <name type="common">Mouse</name>
    <dbReference type="NCBI Taxonomy" id="10090"/>
    <lineage>
        <taxon>Eukaryota</taxon>
        <taxon>Metazoa</taxon>
        <taxon>Chordata</taxon>
        <taxon>Craniata</taxon>
        <taxon>Vertebrata</taxon>
        <taxon>Euteleostomi</taxon>
        <taxon>Mammalia</taxon>
        <taxon>Eutheria</taxon>
        <taxon>Euarchontoglires</taxon>
        <taxon>Glires</taxon>
        <taxon>Rodentia</taxon>
        <taxon>Myomorpha</taxon>
        <taxon>Muroidea</taxon>
        <taxon>Muridae</taxon>
        <taxon>Murinae</taxon>
        <taxon>Mus</taxon>
        <taxon>Mus</taxon>
    </lineage>
</organism>
<evidence type="ECO:0000250" key="1"/>
<evidence type="ECO:0000255" key="2">
    <source>
        <dbReference type="PROSITE-ProRule" id="PRU00041"/>
    </source>
</evidence>
<evidence type="ECO:0000256" key="3">
    <source>
        <dbReference type="SAM" id="MobiDB-lite"/>
    </source>
</evidence>
<evidence type="ECO:0000269" key="4">
    <source>
    </source>
</evidence>
<evidence type="ECO:0000269" key="5">
    <source>
    </source>
</evidence>
<proteinExistence type="evidence at transcript level"/>
<comment type="function">
    <text evidence="4 5">Calcium sensor which most probably regulates fusion of vesicles with membranes. Binds calcium and phospholipids. May be involved in calcium dependent neurotransmitter release through the interaction with UNC13A. May be involved in calcium-dependent spontaneous release of neurotransmitter in absence of action potentials in neuronal cells. Regulates Ca(2+)-dependent secretory lysosome exocytosis in mast cells.</text>
</comment>
<comment type="cofactor">
    <cofactor evidence="2">
        <name>Ca(2+)</name>
        <dbReference type="ChEBI" id="CHEBI:29108"/>
    </cofactor>
</comment>
<comment type="subunit">
    <text evidence="1">Interacts (via N-terminus) with UNC13A. Interacts with cytoplasmic dynein light chain DYNLT1 (By similarity). Interacts with UNC13D (By similarity).</text>
</comment>
<comment type="subcellular location">
    <subcellularLocation>
        <location evidence="1">Cytoplasmic vesicle</location>
        <location evidence="1">Secretory vesicle</location>
        <location evidence="1">Synaptic vesicle membrane</location>
        <topology evidence="1">Peripheral membrane protein</topology>
    </subcellularLocation>
    <subcellularLocation>
        <location evidence="1">Synapse</location>
        <location evidence="1">Synaptosome</location>
    </subcellularLocation>
    <subcellularLocation>
        <location evidence="1">Lysosome</location>
    </subcellularLocation>
</comment>
<comment type="tissue specificity">
    <text evidence="4">Brain and mast cells.</text>
</comment>
<comment type="domain">
    <text evidence="1">C2 domain 1 is involved in binding calcium and phospholipids.</text>
</comment>
<keyword id="KW-0106">Calcium</keyword>
<keyword id="KW-0111">Calcium/phospholipid-binding</keyword>
<keyword id="KW-0968">Cytoplasmic vesicle</keyword>
<keyword id="KW-0268">Exocytosis</keyword>
<keyword id="KW-0458">Lysosome</keyword>
<keyword id="KW-0472">Membrane</keyword>
<keyword id="KW-0479">Metal-binding</keyword>
<keyword id="KW-1185">Reference proteome</keyword>
<keyword id="KW-0677">Repeat</keyword>
<keyword id="KW-0770">Synapse</keyword>
<keyword id="KW-0771">Synaptosome</keyword>
<sequence>MRGRRGDRMTINIQEHMAINVCPGPIRPIRQISDYFPRRGPGPEGGGGGGGTGCGEAPAHLAPLALAPPAALLGATTPDDGAEVDSYDSDDTTALGTLEFDLLYDQASCMLHCRILRAKGLKPMDFNGLADPYVKLHLLPGACKANKLKTKTQRNTLNPVWNEELTYSGITDDDITHKVLRISVCDEDKLSHNEFIGEIRVPLRRLKPSQKKHFNICLERQVPLPSPSSMSAALRGISCYLKELEQAEQGPGLLEERGRILLSLSYSSRRHGLLVGIVRCAHLAAMDVNGYSDPYVKTYLRPDVDKKSKHKTCVKKKTLNPEFNEEFFYEIELSTLATKTLEVTVWDYDIGKSNDFIGGVSLGPGARGEAQKHWNDCLHQPDTALERWHTLTSELPPAAGAYPLA</sequence>
<reference key="1">
    <citation type="journal article" date="2004" name="Genome Res.">
        <title>The status, quality, and expansion of the NIH full-length cDNA project: the Mammalian Gene Collection (MGC).</title>
        <authorList>
            <consortium name="The MGC Project Team"/>
        </authorList>
    </citation>
    <scope>NUCLEOTIDE SEQUENCE [LARGE SCALE MRNA]</scope>
    <source>
        <strain>C57BL/6J</strain>
        <tissue>Brain</tissue>
    </source>
</reference>
<reference key="2">
    <citation type="journal article" date="2008" name="J. Immunol.">
        <title>Doc2 alpha and Munc13-4 regulate Ca(2+) -dependent secretory lysosome exocytosis in mast cells.</title>
        <authorList>
            <person name="Higashio H."/>
            <person name="Nishimura N."/>
            <person name="Ishizaki H."/>
            <person name="Miyoshi J."/>
            <person name="Orita S."/>
            <person name="Sakane A."/>
            <person name="Sasaki T."/>
        </authorList>
    </citation>
    <scope>FUNCTION</scope>
    <scope>TISSUE SPECIFICITY</scope>
</reference>
<reference key="3">
    <citation type="journal article" date="2010" name="Science">
        <title>Doc2b is a high-affinity Ca2+ sensor for spontaneous neurotransmitter release.</title>
        <authorList>
            <person name="Groffen A.J."/>
            <person name="Martens S."/>
            <person name="Diez Arazola R."/>
            <person name="Cornelisse L.N."/>
            <person name="Lozovaya N."/>
            <person name="de Jong A.P."/>
            <person name="Goriounova N.A."/>
            <person name="Habets R.L."/>
            <person name="Takai Y."/>
            <person name="Borst J.G."/>
            <person name="Brose N."/>
            <person name="McMahon H.T."/>
            <person name="Verhage M."/>
        </authorList>
    </citation>
    <scope>FUNCTION</scope>
</reference>
<name>DOC2A_MOUSE</name>
<feature type="chain" id="PRO_0000079966" description="Double C2-like domain-containing protein alpha">
    <location>
        <begin position="1"/>
        <end position="405"/>
    </location>
</feature>
<feature type="domain" description="C2 1" evidence="2">
    <location>
        <begin position="94"/>
        <end position="216"/>
    </location>
</feature>
<feature type="domain" description="C2 2" evidence="2">
    <location>
        <begin position="256"/>
        <end position="389"/>
    </location>
</feature>
<feature type="region of interest" description="Interaction with UNC13D and DYNLT1" evidence="1">
    <location>
        <begin position="1"/>
        <end position="94"/>
    </location>
</feature>
<feature type="region of interest" description="Disordered" evidence="3">
    <location>
        <begin position="34"/>
        <end position="54"/>
    </location>
</feature>
<feature type="region of interest" description="Interaction with UNC13D" evidence="1">
    <location>
        <begin position="220"/>
        <end position="405"/>
    </location>
</feature>
<feature type="compositionally biased region" description="Gly residues" evidence="3">
    <location>
        <begin position="42"/>
        <end position="54"/>
    </location>
</feature>
<feature type="binding site" evidence="2">
    <location>
        <position position="125"/>
    </location>
    <ligand>
        <name>Ca(2+)</name>
        <dbReference type="ChEBI" id="CHEBI:29108"/>
        <label>1</label>
    </ligand>
</feature>
<feature type="binding site" evidence="2">
    <location>
        <position position="131"/>
    </location>
    <ligand>
        <name>Ca(2+)</name>
        <dbReference type="ChEBI" id="CHEBI:29108"/>
        <label>1</label>
    </ligand>
</feature>
<feature type="binding site" evidence="2">
    <location>
        <position position="186"/>
    </location>
    <ligand>
        <name>Ca(2+)</name>
        <dbReference type="ChEBI" id="CHEBI:29108"/>
        <label>1</label>
    </ligand>
</feature>
<feature type="binding site" evidence="2">
    <location>
        <position position="188"/>
    </location>
    <ligand>
        <name>Ca(2+)</name>
        <dbReference type="ChEBI" id="CHEBI:29108"/>
        <label>1</label>
    </ligand>
</feature>
<feature type="binding site" evidence="2">
    <location>
        <position position="287"/>
    </location>
    <ligand>
        <name>Ca(2+)</name>
        <dbReference type="ChEBI" id="CHEBI:29108"/>
        <label>2</label>
    </ligand>
</feature>
<feature type="binding site" evidence="2">
    <location>
        <position position="287"/>
    </location>
    <ligand>
        <name>Ca(2+)</name>
        <dbReference type="ChEBI" id="CHEBI:29108"/>
        <label>3</label>
    </ligand>
</feature>
<feature type="binding site" evidence="2">
    <location>
        <position position="293"/>
    </location>
    <ligand>
        <name>Ca(2+)</name>
        <dbReference type="ChEBI" id="CHEBI:29108"/>
        <label>2</label>
    </ligand>
</feature>
<feature type="binding site" evidence="2">
    <location>
        <position position="347"/>
    </location>
    <ligand>
        <name>Ca(2+)</name>
        <dbReference type="ChEBI" id="CHEBI:29108"/>
        <label>2</label>
    </ligand>
</feature>
<feature type="binding site" evidence="2">
    <location>
        <position position="347"/>
    </location>
    <ligand>
        <name>Ca(2+)</name>
        <dbReference type="ChEBI" id="CHEBI:29108"/>
        <label>3</label>
    </ligand>
</feature>
<feature type="binding site" evidence="2">
    <location>
        <position position="349"/>
    </location>
    <ligand>
        <name>Ca(2+)</name>
        <dbReference type="ChEBI" id="CHEBI:29108"/>
        <label>2</label>
    </ligand>
</feature>
<feature type="binding site" evidence="2">
    <location>
        <position position="349"/>
    </location>
    <ligand>
        <name>Ca(2+)</name>
        <dbReference type="ChEBI" id="CHEBI:29108"/>
        <label>3</label>
    </ligand>
</feature>
<feature type="binding site" evidence="2">
    <location>
        <position position="355"/>
    </location>
    <ligand>
        <name>Ca(2+)</name>
        <dbReference type="ChEBI" id="CHEBI:29108"/>
        <label>3</label>
    </ligand>
</feature>
<dbReference type="EMBL" id="BC055768">
    <property type="protein sequence ID" value="AAH55768.1"/>
    <property type="molecule type" value="mRNA"/>
</dbReference>
<dbReference type="CCDS" id="CCDS21847.1"/>
<dbReference type="RefSeq" id="NP_001355284.1">
    <property type="nucleotide sequence ID" value="NM_001368355.1"/>
</dbReference>
<dbReference type="RefSeq" id="NP_001355285.1">
    <property type="nucleotide sequence ID" value="NM_001368356.2"/>
</dbReference>
<dbReference type="RefSeq" id="NP_001355286.1">
    <property type="nucleotide sequence ID" value="NM_001368357.1"/>
</dbReference>
<dbReference type="RefSeq" id="NP_001355287.1">
    <property type="nucleotide sequence ID" value="NM_001368358.1"/>
</dbReference>
<dbReference type="RefSeq" id="NP_001399253.1">
    <property type="nucleotide sequence ID" value="NM_001412324.1"/>
</dbReference>
<dbReference type="RefSeq" id="NP_034199.1">
    <property type="nucleotide sequence ID" value="NM_010069.2"/>
</dbReference>
<dbReference type="RefSeq" id="XP_017177455.1">
    <property type="nucleotide sequence ID" value="XM_017321966.1"/>
</dbReference>
<dbReference type="RefSeq" id="XP_017177456.1">
    <property type="nucleotide sequence ID" value="XM_017321967.1"/>
</dbReference>
<dbReference type="RefSeq" id="XP_017177457.1">
    <property type="nucleotide sequence ID" value="XM_017321968.1"/>
</dbReference>
<dbReference type="RefSeq" id="XP_017177458.1">
    <property type="nucleotide sequence ID" value="XM_017321969.1"/>
</dbReference>
<dbReference type="RefSeq" id="XP_017177459.1">
    <property type="nucleotide sequence ID" value="XM_017321970.1"/>
</dbReference>
<dbReference type="RefSeq" id="XP_017177460.1">
    <property type="nucleotide sequence ID" value="XM_017321971.1"/>
</dbReference>
<dbReference type="RefSeq" id="XP_036008534.1">
    <property type="nucleotide sequence ID" value="XM_036152641.1"/>
</dbReference>
<dbReference type="RefSeq" id="XP_036008535.1">
    <property type="nucleotide sequence ID" value="XM_036152642.1"/>
</dbReference>
<dbReference type="SMR" id="Q7TNF0"/>
<dbReference type="BioGRID" id="199265">
    <property type="interactions" value="1"/>
</dbReference>
<dbReference type="FunCoup" id="Q7TNF0">
    <property type="interactions" value="201"/>
</dbReference>
<dbReference type="STRING" id="10090.ENSMUSP00000070119"/>
<dbReference type="iPTMnet" id="Q7TNF0"/>
<dbReference type="PhosphoSitePlus" id="Q7TNF0"/>
<dbReference type="PaxDb" id="10090-ENSMUSP00000070119"/>
<dbReference type="ProteomicsDB" id="277485"/>
<dbReference type="Antibodypedia" id="26947">
    <property type="antibodies" value="130 antibodies from 24 providers"/>
</dbReference>
<dbReference type="DNASU" id="13446"/>
<dbReference type="Ensembl" id="ENSMUST00000064110.14">
    <property type="protein sequence ID" value="ENSMUSP00000070119.8"/>
    <property type="gene ID" value="ENSMUSG00000052301.15"/>
</dbReference>
<dbReference type="GeneID" id="13446"/>
<dbReference type="KEGG" id="mmu:13446"/>
<dbReference type="UCSC" id="uc009jtb.1">
    <property type="organism name" value="mouse"/>
</dbReference>
<dbReference type="AGR" id="MGI:109446"/>
<dbReference type="CTD" id="8448"/>
<dbReference type="MGI" id="MGI:109446">
    <property type="gene designation" value="Doc2a"/>
</dbReference>
<dbReference type="VEuPathDB" id="HostDB:ENSMUSG00000052301"/>
<dbReference type="eggNOG" id="KOG1013">
    <property type="taxonomic scope" value="Eukaryota"/>
</dbReference>
<dbReference type="GeneTree" id="ENSGT00940000159141"/>
<dbReference type="HOGENOM" id="CLU_023008_3_0_1"/>
<dbReference type="InParanoid" id="Q7TNF0"/>
<dbReference type="OMA" id="WEMEQQR"/>
<dbReference type="OrthoDB" id="270970at2759"/>
<dbReference type="PhylomeDB" id="Q7TNF0"/>
<dbReference type="TreeFam" id="TF351844"/>
<dbReference type="BioGRID-ORCS" id="13446">
    <property type="hits" value="2 hits in 79 CRISPR screens"/>
</dbReference>
<dbReference type="PRO" id="PR:Q7TNF0"/>
<dbReference type="Proteomes" id="UP000000589">
    <property type="component" value="Chromosome 7"/>
</dbReference>
<dbReference type="RNAct" id="Q7TNF0">
    <property type="molecule type" value="protein"/>
</dbReference>
<dbReference type="Bgee" id="ENSMUSG00000052301">
    <property type="expression patterns" value="Expressed in ventromedial nucleus of hypothalamus and 103 other cell types or tissues"/>
</dbReference>
<dbReference type="ExpressionAtlas" id="Q7TNF0">
    <property type="expression patterns" value="baseline and differential"/>
</dbReference>
<dbReference type="GO" id="GO:0098850">
    <property type="term" value="C:extrinsic component of synaptic vesicle membrane"/>
    <property type="evidence" value="ECO:0007669"/>
    <property type="project" value="Ensembl"/>
</dbReference>
<dbReference type="GO" id="GO:0098978">
    <property type="term" value="C:glutamatergic synapse"/>
    <property type="evidence" value="ECO:0007669"/>
    <property type="project" value="Ensembl"/>
</dbReference>
<dbReference type="GO" id="GO:0005764">
    <property type="term" value="C:lysosome"/>
    <property type="evidence" value="ECO:0007669"/>
    <property type="project" value="UniProtKB-SubCell"/>
</dbReference>
<dbReference type="GO" id="GO:0043005">
    <property type="term" value="C:neuron projection"/>
    <property type="evidence" value="ECO:0007669"/>
    <property type="project" value="UniProtKB-KW"/>
</dbReference>
<dbReference type="GO" id="GO:0005544">
    <property type="term" value="F:calcium-dependent phospholipid binding"/>
    <property type="evidence" value="ECO:0007669"/>
    <property type="project" value="UniProtKB-KW"/>
</dbReference>
<dbReference type="GO" id="GO:0046872">
    <property type="term" value="F:metal ion binding"/>
    <property type="evidence" value="ECO:0007669"/>
    <property type="project" value="UniProtKB-KW"/>
</dbReference>
<dbReference type="GO" id="GO:0099502">
    <property type="term" value="P:calcium-dependent activation of synaptic vesicle fusion"/>
    <property type="evidence" value="ECO:0000314"/>
    <property type="project" value="SynGO"/>
</dbReference>
<dbReference type="GO" id="GO:0017158">
    <property type="term" value="P:regulation of calcium ion-dependent exocytosis"/>
    <property type="evidence" value="ECO:0000315"/>
    <property type="project" value="UniProtKB"/>
</dbReference>
<dbReference type="GO" id="GO:0061669">
    <property type="term" value="P:spontaneous neurotransmitter secretion"/>
    <property type="evidence" value="ECO:0000314"/>
    <property type="project" value="MGI"/>
</dbReference>
<dbReference type="CDD" id="cd04035">
    <property type="entry name" value="C2A_Rabphilin_Doc2"/>
    <property type="match status" value="1"/>
</dbReference>
<dbReference type="CDD" id="cd08384">
    <property type="entry name" value="C2B_Rabphilin_Doc2"/>
    <property type="match status" value="1"/>
</dbReference>
<dbReference type="FunFam" id="2.60.40.150:FF:000032">
    <property type="entry name" value="Double c2-like domain-containing"/>
    <property type="match status" value="1"/>
</dbReference>
<dbReference type="FunFam" id="2.60.40.150:FF:000023">
    <property type="entry name" value="Double C2-like domain-containing protein"/>
    <property type="match status" value="1"/>
</dbReference>
<dbReference type="Gene3D" id="2.60.40.150">
    <property type="entry name" value="C2 domain"/>
    <property type="match status" value="2"/>
</dbReference>
<dbReference type="InterPro" id="IPR000008">
    <property type="entry name" value="C2_dom"/>
</dbReference>
<dbReference type="InterPro" id="IPR035892">
    <property type="entry name" value="C2_domain_sf"/>
</dbReference>
<dbReference type="InterPro" id="IPR014638">
    <property type="entry name" value="Doc2"/>
</dbReference>
<dbReference type="InterPro" id="IPR043566">
    <property type="entry name" value="Rabphilin/DOC2/Noc2"/>
</dbReference>
<dbReference type="InterPro" id="IPR047022">
    <property type="entry name" value="Rabphilin_Doc2_C2A"/>
</dbReference>
<dbReference type="InterPro" id="IPR001565">
    <property type="entry name" value="Synaptotagmin"/>
</dbReference>
<dbReference type="PANTHER" id="PTHR45729:SF1">
    <property type="entry name" value="DOUBLE C2-LIKE DOMAIN-CONTAINING PROTEIN ALPHA"/>
    <property type="match status" value="1"/>
</dbReference>
<dbReference type="PANTHER" id="PTHR45729">
    <property type="entry name" value="RABPHILIN, ISOFORM A"/>
    <property type="match status" value="1"/>
</dbReference>
<dbReference type="Pfam" id="PF00168">
    <property type="entry name" value="C2"/>
    <property type="match status" value="2"/>
</dbReference>
<dbReference type="PIRSF" id="PIRSF036931">
    <property type="entry name" value="Doc2"/>
    <property type="match status" value="1"/>
</dbReference>
<dbReference type="PRINTS" id="PR00360">
    <property type="entry name" value="C2DOMAIN"/>
</dbReference>
<dbReference type="PRINTS" id="PR00399">
    <property type="entry name" value="SYNAPTOTAGMN"/>
</dbReference>
<dbReference type="SMART" id="SM00239">
    <property type="entry name" value="C2"/>
    <property type="match status" value="2"/>
</dbReference>
<dbReference type="SUPFAM" id="SSF49562">
    <property type="entry name" value="C2 domain (Calcium/lipid-binding domain, CaLB)"/>
    <property type="match status" value="2"/>
</dbReference>
<dbReference type="PROSITE" id="PS50004">
    <property type="entry name" value="C2"/>
    <property type="match status" value="2"/>
</dbReference>